<accession>P04437</accession>
<accession>A0JD25</accession>
<reference key="1">
    <citation type="journal article" date="1986" name="Immunogenetics">
        <title>The complete primary structure of the T-cell receptor genes from an alloreactive cytotoxic human T-lymphocyte clone.</title>
        <authorList>
            <person name="Leiden J.M."/>
            <person name="Fraser J.D."/>
            <person name="Strominger J.L."/>
        </authorList>
    </citation>
    <scope>NUCLEOTIDE SEQUENCE [MRNA]</scope>
</reference>
<reference key="2">
    <citation type="journal article" date="1997" name="Genome Res.">
        <title>Analysis of the 1.1-Mb human alpha/delta T-cell receptor locus with bacterial artificial chromosome clones.</title>
        <authorList>
            <person name="Boysen C."/>
            <person name="Simon M.I."/>
            <person name="Hood L."/>
        </authorList>
    </citation>
    <scope>NUCLEOTIDE SEQUENCE [GENOMIC DNA] (IMGT ALLELE TRAV29/DV5*01)</scope>
</reference>
<reference key="3">
    <citation type="journal article" date="2005" name="Nature">
        <title>Generation and annotation of the DNA sequences of human chromosomes 2 and 4.</title>
        <authorList>
            <person name="Hillier L.W."/>
            <person name="Graves T.A."/>
            <person name="Fulton R.S."/>
            <person name="Fulton L.A."/>
            <person name="Pepin K.H."/>
            <person name="Minx P."/>
            <person name="Wagner-McPherson C."/>
            <person name="Layman D."/>
            <person name="Wylie K."/>
            <person name="Sekhon M."/>
            <person name="Becker M.C."/>
            <person name="Fewell G.A."/>
            <person name="Delehaunty K.D."/>
            <person name="Miner T.L."/>
            <person name="Nash W.E."/>
            <person name="Kremitzki C."/>
            <person name="Oddy L."/>
            <person name="Du H."/>
            <person name="Sun H."/>
            <person name="Bradshaw-Cordum H."/>
            <person name="Ali J."/>
            <person name="Carter J."/>
            <person name="Cordes M."/>
            <person name="Harris A."/>
            <person name="Isak A."/>
            <person name="van Brunt A."/>
            <person name="Nguyen C."/>
            <person name="Du F."/>
            <person name="Courtney L."/>
            <person name="Kalicki J."/>
            <person name="Ozersky P."/>
            <person name="Abbott S."/>
            <person name="Armstrong J."/>
            <person name="Belter E.A."/>
            <person name="Caruso L."/>
            <person name="Cedroni M."/>
            <person name="Cotton M."/>
            <person name="Davidson T."/>
            <person name="Desai A."/>
            <person name="Elliott G."/>
            <person name="Erb T."/>
            <person name="Fronick C."/>
            <person name="Gaige T."/>
            <person name="Haakenson W."/>
            <person name="Haglund K."/>
            <person name="Holmes A."/>
            <person name="Harkins R."/>
            <person name="Kim K."/>
            <person name="Kruchowski S.S."/>
            <person name="Strong C.M."/>
            <person name="Grewal N."/>
            <person name="Goyea E."/>
            <person name="Hou S."/>
            <person name="Levy A."/>
            <person name="Martinka S."/>
            <person name="Mead K."/>
            <person name="McLellan M.D."/>
            <person name="Meyer R."/>
            <person name="Randall-Maher J."/>
            <person name="Tomlinson C."/>
            <person name="Dauphin-Kohlberg S."/>
            <person name="Kozlowicz-Reilly A."/>
            <person name="Shah N."/>
            <person name="Swearengen-Shahid S."/>
            <person name="Snider J."/>
            <person name="Strong J.T."/>
            <person name="Thompson J."/>
            <person name="Yoakum M."/>
            <person name="Leonard S."/>
            <person name="Pearman C."/>
            <person name="Trani L."/>
            <person name="Radionenko M."/>
            <person name="Waligorski J.E."/>
            <person name="Wang C."/>
            <person name="Rock S.M."/>
            <person name="Tin-Wollam A.-M."/>
            <person name="Maupin R."/>
            <person name="Latreille P."/>
            <person name="Wendl M.C."/>
            <person name="Yang S.-P."/>
            <person name="Pohl C."/>
            <person name="Wallis J.W."/>
            <person name="Spieth J."/>
            <person name="Bieri T.A."/>
            <person name="Berkowicz N."/>
            <person name="Nelson J.O."/>
            <person name="Osborne J."/>
            <person name="Ding L."/>
            <person name="Meyer R."/>
            <person name="Sabo A."/>
            <person name="Shotland Y."/>
            <person name="Sinha P."/>
            <person name="Wohldmann P.E."/>
            <person name="Cook L.L."/>
            <person name="Hickenbotham M.T."/>
            <person name="Eldred J."/>
            <person name="Williams D."/>
            <person name="Jones T.A."/>
            <person name="She X."/>
            <person name="Ciccarelli F.D."/>
            <person name="Izaurralde E."/>
            <person name="Taylor J."/>
            <person name="Schmutz J."/>
            <person name="Myers R.M."/>
            <person name="Cox D.R."/>
            <person name="Huang X."/>
            <person name="McPherson J.D."/>
            <person name="Mardis E.R."/>
            <person name="Clifton S.W."/>
            <person name="Warren W.C."/>
            <person name="Chinwalla A.T."/>
            <person name="Eddy S.R."/>
            <person name="Marra M.A."/>
            <person name="Ovcharenko I."/>
            <person name="Furey T.S."/>
            <person name="Miller W."/>
            <person name="Eichler E.E."/>
            <person name="Bork P."/>
            <person name="Suyama M."/>
            <person name="Torrents D."/>
            <person name="Waterston R.H."/>
            <person name="Wilson R.K."/>
        </authorList>
    </citation>
    <scope>NUCLEOTIDE SEQUENCE [LARGE SCALE GENOMIC DNA] (IMGT ALLELE TRAV29/DV5*01)</scope>
</reference>
<reference key="4">
    <citation type="book" date="2001" name="The T Cell Receptor FactsBook.">
        <title>The T Cell Receptor FactsBook.</title>
        <editorList>
            <person name="Lefranc M.P."/>
            <person name="Lefranc G."/>
        </editorList>
        <authorList>
            <person name="Lefranc M.P."/>
            <person name="Lefranc G."/>
        </authorList>
    </citation>
    <scope>NOMENCLATURE</scope>
</reference>
<reference key="5">
    <citation type="journal article" date="2004" name="Nat. Rev. Immunol.">
        <title>The many important facets of T-cell repertoire diversity.</title>
        <authorList>
            <person name="Nikolich-Zugich J."/>
            <person name="Slifka M.K."/>
            <person name="Messaoudi I."/>
        </authorList>
    </citation>
    <scope>REVIEW ON T CELL REPERTOIRE DIVERSITY</scope>
</reference>
<reference key="6">
    <citation type="journal article" date="2010" name="Cold Spring Harb. Perspect. Biol.">
        <title>Structural biology of the T-cell receptor: insights into receptor assembly, ligand recognition, and initiation of signaling.</title>
        <authorList>
            <person name="Wucherpfennig K.W."/>
            <person name="Gagnon E."/>
            <person name="Call M.J."/>
            <person name="Huseby E.S."/>
            <person name="Call M.E."/>
        </authorList>
    </citation>
    <scope>REVIEW ON T CELL RECEPTOR-CD3 COMPLEX ASSEMBLY</scope>
    <scope>SUBCELLULAR LOCATION</scope>
</reference>
<reference key="7">
    <citation type="journal article" date="2013" name="Nat. Rev. Immunol.">
        <title>T cell receptor signalling networks: branched, diversified and bounded.</title>
        <authorList>
            <person name="Brownlie R.J."/>
            <person name="Zamoyska R."/>
        </authorList>
    </citation>
    <scope>REVIEW ON T CELL RECEPTOR SIGNALING</scope>
</reference>
<reference key="8">
    <citation type="journal article" date="2014" name="Front. Immunol.">
        <title>Immunoglobulin and T Cell Receptor Genes: IMGT((R)) and the Birth and Rise of Immunoinformatics.</title>
        <authorList>
            <person name="Lefranc M.P."/>
        </authorList>
    </citation>
    <scope>NOMENCLATURE</scope>
</reference>
<reference key="9">
    <citation type="journal article" date="2015" name="Annu. Rev. Immunol.">
        <title>T cell antigen receptor recognition of antigen-presenting molecules.</title>
        <authorList>
            <person name="Rossjohn J."/>
            <person name="Gras S."/>
            <person name="Miles J.J."/>
            <person name="Turner S.J."/>
            <person name="Godfrey D.I."/>
            <person name="McCluskey J."/>
        </authorList>
    </citation>
    <scope>REVIEW ON FUNCTION</scope>
</reference>
<reference evidence="11" key="10">
    <citation type="journal article" date="1998" name="Immunity">
        <title>Two human T cell receptors bind in a similar diagonal mode to the HLA-A2/Tax peptide complex using different TCR amino acids.</title>
        <authorList>
            <person name="Ding Y.H."/>
            <person name="Smith K.J."/>
            <person name="Garboczi D.N."/>
            <person name="Utz U."/>
            <person name="Biddison W.E."/>
            <person name="Wiley D.C."/>
        </authorList>
    </citation>
    <scope>X-RAY CRYSTALLOGRAPHY (2.50 ANGSTROMS) OF 28-118</scope>
    <scope>DISULFIDE BONDS</scope>
</reference>
<proteinExistence type="evidence at protein level"/>
<evidence type="ECO:0000255" key="1"/>
<evidence type="ECO:0000255" key="2">
    <source>
        <dbReference type="PROSITE-ProRule" id="PRU00114"/>
    </source>
</evidence>
<evidence type="ECO:0000269" key="3">
    <source>
    </source>
</evidence>
<evidence type="ECO:0000303" key="4">
    <source>
    </source>
</evidence>
<evidence type="ECO:0000303" key="5">
    <source>
    </source>
</evidence>
<evidence type="ECO:0000303" key="6">
    <source>
    </source>
</evidence>
<evidence type="ECO:0000303" key="7">
    <source>
    </source>
</evidence>
<evidence type="ECO:0000303" key="8">
    <source>
    </source>
</evidence>
<evidence type="ECO:0000303" key="9">
    <source ref="4"/>
</evidence>
<evidence type="ECO:0000305" key="10"/>
<evidence type="ECO:0007744" key="11">
    <source>
        <dbReference type="PDB" id="1BD2"/>
    </source>
</evidence>
<evidence type="ECO:0007829" key="12">
    <source>
        <dbReference type="PDB" id="1BD2"/>
    </source>
</evidence>
<protein>
    <recommendedName>
        <fullName evidence="9">T cell receptor alpha variable 29/delta variable 5</fullName>
    </recommendedName>
</protein>
<sequence length="119" mass="13438">MAMLLGASVLILWLQPDWVNSQQKNDDQQVKQNSPSLSVQEGRISILNCDYTNSMFDYFLWYKKYPAEGPTFLISISSIKDKNEDGRFTVFLNKSAKHLSLHIVPSQPGDSAVYFCAAS</sequence>
<keyword id="KW-0002">3D-structure</keyword>
<keyword id="KW-1064">Adaptive immunity</keyword>
<keyword id="KW-1003">Cell membrane</keyword>
<keyword id="KW-1015">Disulfide bond</keyword>
<keyword id="KW-0325">Glycoprotein</keyword>
<keyword id="KW-0391">Immunity</keyword>
<keyword id="KW-0393">Immunoglobulin domain</keyword>
<keyword id="KW-0472">Membrane</keyword>
<keyword id="KW-1267">Proteomics identification</keyword>
<keyword id="KW-0675">Receptor</keyword>
<keyword id="KW-1185">Reference proteome</keyword>
<keyword id="KW-0732">Signal</keyword>
<keyword id="KW-1279">T cell receptor</keyword>
<feature type="signal peptide" evidence="1">
    <location>
        <begin position="1"/>
        <end position="21"/>
    </location>
</feature>
<feature type="chain" id="PRO_0000033593" description="T cell receptor alpha variable 29/delta variable 5" evidence="1">
    <location>
        <begin position="22"/>
        <end position="119"/>
    </location>
</feature>
<feature type="domain" description="Ig-like" evidence="2">
    <location>
        <begin position="22"/>
        <end position="119" status="greater than"/>
    </location>
</feature>
<feature type="glycosylation site" description="N-linked (GlcNAc...) asparagine" evidence="1">
    <location>
        <position position="93"/>
    </location>
</feature>
<feature type="disulfide bond" evidence="2 3 11">
    <location>
        <begin position="49"/>
        <end position="116"/>
    </location>
</feature>
<feature type="sequence conflict" description="In Ref. 1; AAA60627." evidence="10" ref="1">
    <original>S</original>
    <variation>K</variation>
    <location>
        <position position="119"/>
    </location>
</feature>
<feature type="non-terminal residue">
    <location>
        <position position="119"/>
    </location>
</feature>
<feature type="strand" evidence="12">
    <location>
        <begin position="35"/>
        <end position="40"/>
    </location>
</feature>
<feature type="strand" evidence="12">
    <location>
        <begin position="45"/>
        <end position="51"/>
    </location>
</feature>
<feature type="strand" evidence="12">
    <location>
        <begin position="58"/>
        <end position="64"/>
    </location>
</feature>
<feature type="strand" evidence="12">
    <location>
        <begin position="70"/>
        <end position="77"/>
    </location>
</feature>
<feature type="strand" evidence="12">
    <location>
        <begin position="81"/>
        <end position="85"/>
    </location>
</feature>
<feature type="strand" evidence="12">
    <location>
        <begin position="88"/>
        <end position="93"/>
    </location>
</feature>
<feature type="turn" evidence="12">
    <location>
        <begin position="94"/>
        <end position="97"/>
    </location>
</feature>
<feature type="strand" evidence="12">
    <location>
        <begin position="98"/>
        <end position="105"/>
    </location>
</feature>
<feature type="helix" evidence="12">
    <location>
        <begin position="108"/>
        <end position="110"/>
    </location>
</feature>
<feature type="strand" evidence="12">
    <location>
        <begin position="112"/>
        <end position="118"/>
    </location>
</feature>
<comment type="function">
    <text evidence="4 6 7 8">V region of the variable domain of T cell receptor (TR) alpha chain that participates in the antigen recognition (PubMed:24600447). Alpha-beta T cell receptors are antigen specific receptors which are essential to the immune response and are present on the cell surface of T lymphocytes. Recognize peptide-major histocompatibility (MH) (pMH) complexes that are displayed by antigen presenting cells (APC), a prerequisite for efficient T cell adaptive immunity against pathogens (PubMed:25493333). Binding of alpha-beta TR to pMH complex initiates TR-CD3 clustering on the cell surface and intracellular activation of LCK that phosphorylates the ITAM motifs of CD3G, CD3D, CD3E and CD247 enabling the recruitment of ZAP70. In turn ZAP70 phosphorylates LAT, which recruits numerous signaling molecules to form the LAT signalosome. The LAT signalosome propagates signal branching to three major signaling pathways, the calcium, the mitogen-activated protein kinase (MAPK) kinase and the nuclear factor NF-kappa-B (NF-kB) pathways, leading to the mobilization of transcription factors that are critical for gene expression and essential for T cell growth and differentiation (PubMed:23524462). The T cell repertoire is generated in the thymus, by V-(D)-J rearrangement. This repertoire is then shaped by intrathymic selection events to generate a peripheral T cell pool of self-MH restricted, non-autoaggressive T cells. Post-thymic interaction of alpha-beta TR with the pMH complexes shapes TR structural and functional avidity (PubMed:15040585).</text>
</comment>
<comment type="subunit">
    <text evidence="5">Alpha-beta TR is a heterodimer composed of an alpha and beta chain; disulfide-linked. The alpha-beta TR is associated with the transmembrane signaling CD3 coreceptor proteins to form the TR-CD3 (TcR or TCR). The assembly of alpha-beta TR heterodimers with CD3 occurs in the endoplasmic reticulum where a single alpha-beta TR heterodimer associates with one CD3D-CD3E heterodimer, one CD3G-CD3E heterodimer and one CD247 homodimer forming a stable octameric structure. CD3D-CD3E and CD3G-CD3E heterodimers preferentially associate with TR alpha and TR beta chains, respectively. The association of the CD247 homodimer is the last step of TcR assembly in the endoplasmic reticulum and is required for transport to the cell surface.</text>
</comment>
<comment type="subcellular location">
    <subcellularLocation>
        <location evidence="5">Cell membrane</location>
    </subcellularLocation>
</comment>
<comment type="polymorphism">
    <text evidence="10">There are several alleles. The sequence shown is that of IMGT allele TRAV29/DV5*01.</text>
</comment>
<comment type="sequence caution" evidence="10">
    <conflict type="miscellaneous discrepancy">
        <sequence resource="EMBL-CDS" id="AAA60627"/>
    </conflict>
    <text>Chimeric mRNA corresponding to regions V and J of T cell receptor (TR) alpha chain.</text>
</comment>
<name>TVA29_HUMAN</name>
<dbReference type="EMBL" id="M15565">
    <property type="protein sequence ID" value="AAA60627.1"/>
    <property type="status" value="ALT_SEQ"/>
    <property type="molecule type" value="mRNA"/>
</dbReference>
<dbReference type="EMBL" id="AE000521">
    <property type="protein sequence ID" value="AAB69028.1"/>
    <property type="molecule type" value="Genomic_DNA"/>
</dbReference>
<dbReference type="EMBL" id="AC245470">
    <property type="status" value="NOT_ANNOTATED_CDS"/>
    <property type="molecule type" value="Genomic_DNA"/>
</dbReference>
<dbReference type="PIR" id="A02016">
    <property type="entry name" value="RWHU7A"/>
</dbReference>
<dbReference type="PDB" id="1BD2">
    <property type="method" value="X-ray"/>
    <property type="resolution" value="2.50 A"/>
    <property type="chains" value="D=28-118"/>
</dbReference>
<dbReference type="PDBsum" id="1BD2"/>
<dbReference type="SMR" id="P04437"/>
<dbReference type="FunCoup" id="P04437">
    <property type="interactions" value="469"/>
</dbReference>
<dbReference type="ChEMBL" id="CHEMBL3580506"/>
<dbReference type="IMGT_GENE-DB" id="TRAV29DV5"/>
<dbReference type="GlyCosmos" id="P04437">
    <property type="glycosylation" value="1 site, No reported glycans"/>
</dbReference>
<dbReference type="GlyGen" id="P04437">
    <property type="glycosylation" value="1 site"/>
</dbReference>
<dbReference type="BioMuta" id="TCRA"/>
<dbReference type="BioMuta" id="TRAV29DV5"/>
<dbReference type="DMDM" id="136488"/>
<dbReference type="MassIVE" id="P04437"/>
<dbReference type="ProteomicsDB" id="51712"/>
<dbReference type="Ensembl" id="ENST00000390458.3">
    <property type="protein sequence ID" value="ENSP00000452209.1"/>
    <property type="gene ID" value="ENSG00000211810.3"/>
</dbReference>
<dbReference type="UCSC" id="uc058zek.1">
    <property type="organism name" value="human"/>
</dbReference>
<dbReference type="AGR" id="HGNC:12127"/>
<dbReference type="GeneCards" id="TRAV29DV5"/>
<dbReference type="HGNC" id="HGNC:12127">
    <property type="gene designation" value="TRAV29DV5"/>
</dbReference>
<dbReference type="HPA" id="ENSG00000211810">
    <property type="expression patterns" value="Tissue enriched (lymphoid)"/>
</dbReference>
<dbReference type="neXtProt" id="NX_P04437"/>
<dbReference type="OpenTargets" id="ENSG00000211810"/>
<dbReference type="VEuPathDB" id="HostDB:ENSG00000211810"/>
<dbReference type="GeneTree" id="ENSGT00940000153130"/>
<dbReference type="InParanoid" id="P04437"/>
<dbReference type="OMA" id="CLFGGSY"/>
<dbReference type="OrthoDB" id="9631130at2759"/>
<dbReference type="PAN-GO" id="P04437">
    <property type="GO annotations" value="1 GO annotation based on evolutionary models"/>
</dbReference>
<dbReference type="PhylomeDB" id="P04437"/>
<dbReference type="PathwayCommons" id="P04437"/>
<dbReference type="Reactome" id="R-HSA-198933">
    <property type="pathway name" value="Immunoregulatory interactions between a Lymphoid and a non-Lymphoid cell"/>
</dbReference>
<dbReference type="Reactome" id="R-HSA-202424">
    <property type="pathway name" value="Downstream TCR signaling"/>
</dbReference>
<dbReference type="Reactome" id="R-HSA-202427">
    <property type="pathway name" value="Phosphorylation of CD3 and TCR zeta chains"/>
</dbReference>
<dbReference type="Reactome" id="R-HSA-202430">
    <property type="pathway name" value="Translocation of ZAP-70 to Immunological synapse"/>
</dbReference>
<dbReference type="Reactome" id="R-HSA-202433">
    <property type="pathway name" value="Generation of second messenger molecules"/>
</dbReference>
<dbReference type="Reactome" id="R-HSA-389948">
    <property type="pathway name" value="Co-inhibition by PD-1"/>
</dbReference>
<dbReference type="ChiTaRS" id="TRAV29DV5">
    <property type="organism name" value="human"/>
</dbReference>
<dbReference type="Pharos" id="P04437">
    <property type="development level" value="Tdark"/>
</dbReference>
<dbReference type="PRO" id="PR:P04437"/>
<dbReference type="Proteomes" id="UP000005640">
    <property type="component" value="Chromosome 14"/>
</dbReference>
<dbReference type="RNAct" id="P04437">
    <property type="molecule type" value="protein"/>
</dbReference>
<dbReference type="Bgee" id="ENSG00000211810">
    <property type="expression patterns" value="Expressed in lymph node and 69 other cell types or tissues"/>
</dbReference>
<dbReference type="GO" id="GO:0005886">
    <property type="term" value="C:plasma membrane"/>
    <property type="evidence" value="ECO:0000304"/>
    <property type="project" value="Reactome"/>
</dbReference>
<dbReference type="GO" id="GO:0042101">
    <property type="term" value="C:T cell receptor complex"/>
    <property type="evidence" value="ECO:0007669"/>
    <property type="project" value="UniProtKB-KW"/>
</dbReference>
<dbReference type="GO" id="GO:0042287">
    <property type="term" value="F:MHC protein binding"/>
    <property type="evidence" value="ECO:0000303"/>
    <property type="project" value="UniProtKB"/>
</dbReference>
<dbReference type="GO" id="GO:0042605">
    <property type="term" value="F:peptide antigen binding"/>
    <property type="evidence" value="ECO:0000318"/>
    <property type="project" value="GO_Central"/>
</dbReference>
<dbReference type="GO" id="GO:0002250">
    <property type="term" value="P:adaptive immune response"/>
    <property type="evidence" value="ECO:0007669"/>
    <property type="project" value="UniProtKB-KW"/>
</dbReference>
<dbReference type="GO" id="GO:0006955">
    <property type="term" value="P:immune response"/>
    <property type="evidence" value="ECO:0000303"/>
    <property type="project" value="UniProtKB"/>
</dbReference>
<dbReference type="CDD" id="cd04983">
    <property type="entry name" value="IgV_TCR_alpha"/>
    <property type="match status" value="1"/>
</dbReference>
<dbReference type="FunFam" id="2.60.40.10:FF:002493">
    <property type="entry name" value="T cell receptor alpha variable 29/delta variable 5 (gene/pseudogene)"/>
    <property type="match status" value="1"/>
</dbReference>
<dbReference type="Gene3D" id="2.60.40.10">
    <property type="entry name" value="Immunoglobulins"/>
    <property type="match status" value="1"/>
</dbReference>
<dbReference type="InterPro" id="IPR007110">
    <property type="entry name" value="Ig-like_dom"/>
</dbReference>
<dbReference type="InterPro" id="IPR036179">
    <property type="entry name" value="Ig-like_dom_sf"/>
</dbReference>
<dbReference type="InterPro" id="IPR013783">
    <property type="entry name" value="Ig-like_fold"/>
</dbReference>
<dbReference type="InterPro" id="IPR013106">
    <property type="entry name" value="Ig_V-set"/>
</dbReference>
<dbReference type="InterPro" id="IPR051006">
    <property type="entry name" value="TCR_variable_domain"/>
</dbReference>
<dbReference type="PANTHER" id="PTHR19343">
    <property type="entry name" value="T CELL RECEPTOR ALPHA VARIABLE 1-2"/>
    <property type="match status" value="1"/>
</dbReference>
<dbReference type="PANTHER" id="PTHR19343:SF24">
    <property type="entry name" value="T CELL RECEPTOR ALPHA VARIABLE 29_DELTA VARIABLE 5"/>
    <property type="match status" value="1"/>
</dbReference>
<dbReference type="Pfam" id="PF07686">
    <property type="entry name" value="V-set"/>
    <property type="match status" value="1"/>
</dbReference>
<dbReference type="SMART" id="SM00406">
    <property type="entry name" value="IGv"/>
    <property type="match status" value="1"/>
</dbReference>
<dbReference type="SUPFAM" id="SSF48726">
    <property type="entry name" value="Immunoglobulin"/>
    <property type="match status" value="1"/>
</dbReference>
<dbReference type="PROSITE" id="PS50835">
    <property type="entry name" value="IG_LIKE"/>
    <property type="match status" value="1"/>
</dbReference>
<gene>
    <name evidence="9" type="primary">TRAV29DV5</name>
</gene>
<organism>
    <name type="scientific">Homo sapiens</name>
    <name type="common">Human</name>
    <dbReference type="NCBI Taxonomy" id="9606"/>
    <lineage>
        <taxon>Eukaryota</taxon>
        <taxon>Metazoa</taxon>
        <taxon>Chordata</taxon>
        <taxon>Craniata</taxon>
        <taxon>Vertebrata</taxon>
        <taxon>Euteleostomi</taxon>
        <taxon>Mammalia</taxon>
        <taxon>Eutheria</taxon>
        <taxon>Euarchontoglires</taxon>
        <taxon>Primates</taxon>
        <taxon>Haplorrhini</taxon>
        <taxon>Catarrhini</taxon>
        <taxon>Hominidae</taxon>
        <taxon>Homo</taxon>
    </lineage>
</organism>